<name>LAC2_TRAVI</name>
<comment type="function">
    <text evidence="2">Lignin degradation and detoxification of lignin-derived products.</text>
</comment>
<comment type="catalytic activity">
    <reaction evidence="2">
        <text>4 hydroquinone + O2 = 4 benzosemiquinone + 2 H2O</text>
        <dbReference type="Rhea" id="RHEA:11276"/>
        <dbReference type="ChEBI" id="CHEBI:15377"/>
        <dbReference type="ChEBI" id="CHEBI:15379"/>
        <dbReference type="ChEBI" id="CHEBI:17594"/>
        <dbReference type="ChEBI" id="CHEBI:17977"/>
        <dbReference type="EC" id="1.10.3.2"/>
    </reaction>
</comment>
<comment type="cofactor">
    <cofactor evidence="2">
        <name>Cu cation</name>
        <dbReference type="ChEBI" id="CHEBI:23378"/>
    </cofactor>
    <text evidence="2">Binds 4 Cu cations per monomer.</text>
</comment>
<comment type="subunit">
    <text evidence="4">Homodimer.</text>
</comment>
<comment type="subcellular location">
    <subcellularLocation>
        <location evidence="2">Secreted</location>
    </subcellularLocation>
</comment>
<comment type="similarity">
    <text evidence="6">Belongs to the multicopper oxidase family.</text>
</comment>
<evidence type="ECO:0000250" key="1">
    <source>
        <dbReference type="UniProtKB" id="D0VWU3"/>
    </source>
</evidence>
<evidence type="ECO:0000250" key="2">
    <source>
        <dbReference type="UniProtKB" id="Q70KY3"/>
    </source>
</evidence>
<evidence type="ECO:0000255" key="3"/>
<evidence type="ECO:0000269" key="4">
    <source>
    </source>
</evidence>
<evidence type="ECO:0000303" key="5">
    <source>
    </source>
</evidence>
<evidence type="ECO:0000305" key="6"/>
<dbReference type="EC" id="1.10.3.2" evidence="2"/>
<dbReference type="EMBL" id="L49377">
    <property type="protein sequence ID" value="AAC41687.1"/>
    <property type="molecule type" value="Genomic_DNA"/>
</dbReference>
<dbReference type="SMR" id="Q99046"/>
<dbReference type="CAZy" id="AA1">
    <property type="family name" value="Auxiliary Activities 1"/>
</dbReference>
<dbReference type="GlyCosmos" id="Q99046">
    <property type="glycosylation" value="7 sites, No reported glycans"/>
</dbReference>
<dbReference type="GO" id="GO:0005576">
    <property type="term" value="C:extracellular region"/>
    <property type="evidence" value="ECO:0007669"/>
    <property type="project" value="UniProtKB-SubCell"/>
</dbReference>
<dbReference type="GO" id="GO:0005507">
    <property type="term" value="F:copper ion binding"/>
    <property type="evidence" value="ECO:0007669"/>
    <property type="project" value="InterPro"/>
</dbReference>
<dbReference type="GO" id="GO:0052716">
    <property type="term" value="F:hydroquinone:oxygen oxidoreductase activity"/>
    <property type="evidence" value="ECO:0007669"/>
    <property type="project" value="UniProtKB-EC"/>
</dbReference>
<dbReference type="GO" id="GO:0046274">
    <property type="term" value="P:lignin catabolic process"/>
    <property type="evidence" value="ECO:0007669"/>
    <property type="project" value="UniProtKB-KW"/>
</dbReference>
<dbReference type="CDD" id="cd13856">
    <property type="entry name" value="CuRO_1_Tv-LCC_like"/>
    <property type="match status" value="1"/>
</dbReference>
<dbReference type="CDD" id="cd13882">
    <property type="entry name" value="CuRO_2_Tv-LCC_like"/>
    <property type="match status" value="1"/>
</dbReference>
<dbReference type="CDD" id="cd13903">
    <property type="entry name" value="CuRO_3_Tv-LCC_like"/>
    <property type="match status" value="1"/>
</dbReference>
<dbReference type="FunFam" id="2.60.40.420:FF:000045">
    <property type="entry name" value="Laccase 2"/>
    <property type="match status" value="1"/>
</dbReference>
<dbReference type="FunFam" id="2.60.40.420:FF:000125">
    <property type="entry name" value="Laccase 2"/>
    <property type="match status" value="1"/>
</dbReference>
<dbReference type="FunFam" id="2.60.40.420:FF:000112">
    <property type="entry name" value="Laccase B"/>
    <property type="match status" value="1"/>
</dbReference>
<dbReference type="Gene3D" id="2.60.40.420">
    <property type="entry name" value="Cupredoxins - blue copper proteins"/>
    <property type="match status" value="3"/>
</dbReference>
<dbReference type="InterPro" id="IPR011707">
    <property type="entry name" value="Cu-oxidase-like_N"/>
</dbReference>
<dbReference type="InterPro" id="IPR001117">
    <property type="entry name" value="Cu-oxidase_2nd"/>
</dbReference>
<dbReference type="InterPro" id="IPR011706">
    <property type="entry name" value="Cu-oxidase_C"/>
</dbReference>
<dbReference type="InterPro" id="IPR045087">
    <property type="entry name" value="Cu-oxidase_fam"/>
</dbReference>
<dbReference type="InterPro" id="IPR033138">
    <property type="entry name" value="Cu_oxidase_CS"/>
</dbReference>
<dbReference type="InterPro" id="IPR008972">
    <property type="entry name" value="Cupredoxin"/>
</dbReference>
<dbReference type="PANTHER" id="PTHR11709:SF394">
    <property type="entry name" value="FI03373P-RELATED"/>
    <property type="match status" value="1"/>
</dbReference>
<dbReference type="PANTHER" id="PTHR11709">
    <property type="entry name" value="MULTI-COPPER OXIDASE"/>
    <property type="match status" value="1"/>
</dbReference>
<dbReference type="Pfam" id="PF00394">
    <property type="entry name" value="Cu-oxidase"/>
    <property type="match status" value="1"/>
</dbReference>
<dbReference type="Pfam" id="PF07731">
    <property type="entry name" value="Cu-oxidase_2"/>
    <property type="match status" value="1"/>
</dbReference>
<dbReference type="Pfam" id="PF07732">
    <property type="entry name" value="Cu-oxidase_3"/>
    <property type="match status" value="1"/>
</dbReference>
<dbReference type="SUPFAM" id="SSF49503">
    <property type="entry name" value="Cupredoxins"/>
    <property type="match status" value="3"/>
</dbReference>
<dbReference type="PROSITE" id="PS00079">
    <property type="entry name" value="MULTICOPPER_OXIDASE1"/>
    <property type="match status" value="1"/>
</dbReference>
<accession>Q99046</accession>
<organism>
    <name type="scientific">Trametes villosa</name>
    <name type="common">White-rot fungus</name>
    <dbReference type="NCBI Taxonomy" id="47662"/>
    <lineage>
        <taxon>Eukaryota</taxon>
        <taxon>Fungi</taxon>
        <taxon>Dikarya</taxon>
        <taxon>Basidiomycota</taxon>
        <taxon>Agaricomycotina</taxon>
        <taxon>Agaricomycetes</taxon>
        <taxon>Polyporales</taxon>
        <taxon>Polyporaceae</taxon>
        <taxon>Trametes</taxon>
    </lineage>
</organism>
<feature type="signal peptide" evidence="3">
    <location>
        <begin position="1"/>
        <end position="20"/>
    </location>
</feature>
<feature type="chain" id="PRO_0000002944" description="Laccase-2">
    <location>
        <begin position="21"/>
        <end position="519"/>
    </location>
</feature>
<feature type="domain" description="Plastocyanin-like 1">
    <location>
        <begin position="22"/>
        <end position="147"/>
    </location>
</feature>
<feature type="domain" description="Plastocyanin-like 2">
    <location>
        <begin position="159"/>
        <end position="301"/>
    </location>
</feature>
<feature type="domain" description="Plastocyanin-like 3">
    <location>
        <begin position="368"/>
        <end position="490"/>
    </location>
</feature>
<feature type="binding site" description="type 2 copper site" evidence="1">
    <location>
        <position position="84"/>
    </location>
    <ligand>
        <name>Cu cation</name>
        <dbReference type="ChEBI" id="CHEBI:23378"/>
        <label>1</label>
    </ligand>
</feature>
<feature type="binding site" description="type 3 copper site" evidence="1">
    <location>
        <position position="86"/>
    </location>
    <ligand>
        <name>Cu cation</name>
        <dbReference type="ChEBI" id="CHEBI:23378"/>
        <label>2</label>
    </ligand>
</feature>
<feature type="binding site" description="type 3 copper site" evidence="1">
    <location>
        <position position="129"/>
    </location>
    <ligand>
        <name>Cu cation</name>
        <dbReference type="ChEBI" id="CHEBI:23378"/>
        <label>2</label>
    </ligand>
</feature>
<feature type="binding site" description="type 3 copper site" evidence="1">
    <location>
        <position position="131"/>
    </location>
    <ligand>
        <name>Cu cation</name>
        <dbReference type="ChEBI" id="CHEBI:23378"/>
        <label>3</label>
    </ligand>
</feature>
<feature type="binding site" description="type 1 copper site" evidence="1">
    <location>
        <position position="415"/>
    </location>
    <ligand>
        <name>Cu cation</name>
        <dbReference type="ChEBI" id="CHEBI:23378"/>
        <label>4</label>
    </ligand>
</feature>
<feature type="binding site" description="type 2 copper site" evidence="1">
    <location>
        <position position="418"/>
    </location>
    <ligand>
        <name>Cu cation</name>
        <dbReference type="ChEBI" id="CHEBI:23378"/>
        <label>1</label>
    </ligand>
</feature>
<feature type="binding site" description="type 3 copper site" evidence="1">
    <location>
        <position position="420"/>
    </location>
    <ligand>
        <name>Cu cation</name>
        <dbReference type="ChEBI" id="CHEBI:23378"/>
        <label>3</label>
    </ligand>
</feature>
<feature type="binding site" description="type 3 copper site" evidence="1">
    <location>
        <position position="472"/>
    </location>
    <ligand>
        <name>Cu cation</name>
        <dbReference type="ChEBI" id="CHEBI:23378"/>
        <label>3</label>
    </ligand>
</feature>
<feature type="binding site" description="type 1 copper site" evidence="1">
    <location>
        <position position="473"/>
    </location>
    <ligand>
        <name>Cu cation</name>
        <dbReference type="ChEBI" id="CHEBI:23378"/>
        <label>4</label>
    </ligand>
</feature>
<feature type="binding site" description="type 3 copper site" evidence="1">
    <location>
        <position position="474"/>
    </location>
    <ligand>
        <name>Cu cation</name>
        <dbReference type="ChEBI" id="CHEBI:23378"/>
        <label>2</label>
    </ligand>
</feature>
<feature type="binding site" description="type 1 copper site" evidence="1">
    <location>
        <position position="478"/>
    </location>
    <ligand>
        <name>Cu cation</name>
        <dbReference type="ChEBI" id="CHEBI:23378"/>
        <label>4</label>
    </ligand>
</feature>
<feature type="glycosylation site" description="N-linked (GlcNAc...) asparagine" evidence="3">
    <location>
        <position position="74"/>
    </location>
</feature>
<feature type="glycosylation site" description="N-linked (GlcNAc...) asparagine" evidence="3">
    <location>
        <position position="161"/>
    </location>
</feature>
<feature type="glycosylation site" description="N-linked (GlcNAc...) asparagine" evidence="3">
    <location>
        <position position="228"/>
    </location>
</feature>
<feature type="glycosylation site" description="N-linked (GlcNAc...) asparagine" evidence="3">
    <location>
        <position position="237"/>
    </location>
</feature>
<feature type="glycosylation site" description="N-linked (GlcNAc...) asparagine" evidence="3">
    <location>
        <position position="271"/>
    </location>
</feature>
<feature type="glycosylation site" description="N-linked (GlcNAc...) asparagine" evidence="3">
    <location>
        <position position="353"/>
    </location>
</feature>
<feature type="glycosylation site" description="N-linked (GlcNAc...) asparagine" evidence="3">
    <location>
        <position position="361"/>
    </location>
</feature>
<feature type="disulfide bond" evidence="2">
    <location>
        <begin position="105"/>
        <end position="508"/>
    </location>
</feature>
<feature type="disulfide bond" evidence="1">
    <location>
        <begin position="137"/>
        <end position="225"/>
    </location>
</feature>
<keyword id="KW-0186">Copper</keyword>
<keyword id="KW-1015">Disulfide bond</keyword>
<keyword id="KW-0325">Glycoprotein</keyword>
<keyword id="KW-0439">Lignin degradation</keyword>
<keyword id="KW-0479">Metal-binding</keyword>
<keyword id="KW-0560">Oxidoreductase</keyword>
<keyword id="KW-0677">Repeat</keyword>
<keyword id="KW-0964">Secreted</keyword>
<keyword id="KW-0732">Signal</keyword>
<proteinExistence type="inferred from homology"/>
<reference key="1">
    <citation type="journal article" date="1996" name="Appl. Environ. Microbiol.">
        <title>Purification, characterization, molecular cloning, and expression of two laccase genes from the white rot basidiomycete Trametes villosa.</title>
        <authorList>
            <person name="Yaver D.S."/>
            <person name="Xu F."/>
            <person name="Golightly E.J."/>
            <person name="Brown K.M."/>
            <person name="Brown S.H."/>
            <person name="Rey M.W."/>
            <person name="Schneider P."/>
            <person name="Halkier T."/>
            <person name="Mondorf K."/>
            <person name="Dalboge H."/>
        </authorList>
    </citation>
    <scope>NUCLEOTIDE SEQUENCE [GENOMIC DNA]</scope>
    <source>
        <tissue>Mycelium</tissue>
    </source>
</reference>
<protein>
    <recommendedName>
        <fullName evidence="5">Laccase-2</fullName>
        <ecNumber evidence="2">1.10.3.2</ecNumber>
    </recommendedName>
    <alternativeName>
        <fullName>Benzenediol:oxygen oxidoreductase 2</fullName>
    </alternativeName>
    <alternativeName>
        <fullName>Diphenol oxidase 2</fullName>
    </alternativeName>
    <alternativeName>
        <fullName>Urishiol oxidase 2</fullName>
    </alternativeName>
</protein>
<gene>
    <name evidence="5" type="primary">LCC2</name>
</gene>
<sequence length="519" mass="55777">MGLQRFSFFVTLALVARSLAAIGPVASLVVANAPVSPDGFLRDAIVVNGVVPSPLITGKKGDRFQLNVVDTLTNHSMLKSTSIHWHGFFQAGTNWAEGPAFVNQCPIASGHSFLYDFHVPDQAGTFWYHSHLSTQYCDGLRGPFVVYDPKDPHASRYDVDNESTVITLTDWYHTAARLGPKFPLGADATLINGLGRSASTPTAALAVINVQHGKRYRFRLVSISCDPNYTFSIDGHNLTVIEVDGINSQPLLVDSIQIFAAQRYSFVLNANQTVGNYWVRANPNFGTVGFAGGINSAILRYQGAPVAEPTTTQTPSVIPLIETNLHPLARMPVPGSPTPGGVDKALNLAFNFNGTNFFINNATFTPPTVPVLLQILSGAQTAQDLLPAGSVYPLPAHSTIEITLPATALAPGAPHPFHLHGHAFAVVRSAGSTTYNYNDPIFRDVVSTGTPAAGDNVTIRFQTDNPGPWFLHCHIDFHLDAGFAIVFAEDVADVKAANPVPKAWSDLCPIYDGLSEANQ</sequence>